<keyword id="KW-0175">Coiled coil</keyword>
<keyword id="KW-0963">Cytoplasm</keyword>
<keyword id="KW-0206">Cytoskeleton</keyword>
<keyword id="KW-0903">Direct protein sequencing</keyword>
<keyword id="KW-0493">Microtubule</keyword>
<name>SFAS_DUNBI</name>
<protein>
    <recommendedName>
        <fullName>SF-assemblin</fullName>
    </recommendedName>
</protein>
<dbReference type="EMBL" id="X90905">
    <property type="protein sequence ID" value="CAA62413.1"/>
    <property type="molecule type" value="mRNA"/>
</dbReference>
<dbReference type="SMR" id="P54214"/>
<dbReference type="GO" id="GO:0005737">
    <property type="term" value="C:cytoplasm"/>
    <property type="evidence" value="ECO:0007669"/>
    <property type="project" value="UniProtKB-KW"/>
</dbReference>
<dbReference type="GO" id="GO:0005874">
    <property type="term" value="C:microtubule"/>
    <property type="evidence" value="ECO:0007669"/>
    <property type="project" value="UniProtKB-KW"/>
</dbReference>
<dbReference type="GO" id="GO:0005200">
    <property type="term" value="F:structural constituent of cytoskeleton"/>
    <property type="evidence" value="ECO:0007669"/>
    <property type="project" value="InterPro"/>
</dbReference>
<dbReference type="InterPro" id="IPR008374">
    <property type="entry name" value="SF_assemblin/giardin_b"/>
</dbReference>
<dbReference type="PANTHER" id="PTHR40412">
    <property type="entry name" value="SF-ASSEMBLIN"/>
    <property type="match status" value="1"/>
</dbReference>
<dbReference type="PANTHER" id="PTHR40412:SF1">
    <property type="entry name" value="SF-ASSEMBLIN"/>
    <property type="match status" value="1"/>
</dbReference>
<dbReference type="Pfam" id="PF06705">
    <property type="entry name" value="SF-assemblin"/>
    <property type="match status" value="1"/>
</dbReference>
<dbReference type="PRINTS" id="PR01799">
    <property type="entry name" value="SFASSEMBLIN"/>
</dbReference>
<sequence length="277" mass="31412">MATSGMVSPTSGRPFSPMRSSVLTTTGSAIKLEHVSEKFAGLWTDLEQEKQARRIAEATRMQLFQESVLRLEKSMEAEVKRRAESDKQLQAHFEGELRVLHERSACQVAEMHNSLKSAIDSFSSRVQDLHAVIREERDQRRNDIEHLATSLVGKVNECVAALDEERTIRMQEQAMALKRFGEDISGVNHRVDTEKAQREADLSGLRVEIHDVLANRNIQDEQFKTVTLDELNAFKAALALEREERVAEDDEIVQAINDYTRALQEGLKMVNMQHNSA</sequence>
<proteinExistence type="evidence at protein level"/>
<accession>P54214</accession>
<organism>
    <name type="scientific">Dunaliella bioculata</name>
    <name type="common">Green alga</name>
    <dbReference type="NCBI Taxonomy" id="13790"/>
    <lineage>
        <taxon>Eukaryota</taxon>
        <taxon>Viridiplantae</taxon>
        <taxon>Chlorophyta</taxon>
        <taxon>core chlorophytes</taxon>
        <taxon>Chlorophyceae</taxon>
        <taxon>CS clade</taxon>
        <taxon>Chlamydomonadales</taxon>
        <taxon>Dunaliellaceae</taxon>
        <taxon>Dunaliella</taxon>
    </lineage>
</organism>
<comment type="function">
    <text evidence="1">Major component of the striated microtubule-associated fibers (SMAFs; system-I-fibers).</text>
</comment>
<comment type="subcellular location">
    <subcellularLocation>
        <location evidence="1">Cytoplasm</location>
        <location evidence="1">Cytoskeleton</location>
    </subcellularLocation>
</comment>
<comment type="domain">
    <text>Consists of a small non-helical N-terminal domain and a rod domain with a 29 residue repeat pattern based on four heptads followed by a skip residue. This alpha-helical protein is characterized by the ability to form a special segmented coiled coil and to assemble into striated fibers of 2 nm protofilaments.</text>
</comment>
<comment type="PTM">
    <text>The N-terminus is blocked.</text>
</comment>
<comment type="similarity">
    <text evidence="4">Belongs to the SF-assemblin family.</text>
</comment>
<feature type="chain" id="PRO_0000221442" description="SF-assemblin">
    <location>
        <begin position="1"/>
        <end position="277"/>
    </location>
</feature>
<feature type="region of interest" description="Nonhelical region">
    <location>
        <begin position="1"/>
        <end position="27"/>
    </location>
</feature>
<feature type="region of interest" description="Disordered" evidence="3">
    <location>
        <begin position="1"/>
        <end position="20"/>
    </location>
</feature>
<feature type="region of interest" description="Rod">
    <location>
        <begin position="28"/>
        <end position="277"/>
    </location>
</feature>
<feature type="coiled-coil region" evidence="2">
    <location>
        <begin position="70"/>
        <end position="90"/>
    </location>
</feature>
<feature type="sequence conflict" description="In Ref. 1; AA sequence." evidence="4" ref="1">
    <original>M</original>
    <variation>Q</variation>
    <location>
        <position position="75"/>
    </location>
</feature>
<feature type="sequence conflict" description="In Ref. 1; AA sequence." evidence="4" ref="1">
    <original>C</original>
    <variation>E</variation>
    <location>
        <position position="106"/>
    </location>
</feature>
<evidence type="ECO:0000250" key="1"/>
<evidence type="ECO:0000255" key="2"/>
<evidence type="ECO:0000256" key="3">
    <source>
        <dbReference type="SAM" id="MobiDB-lite"/>
    </source>
</evidence>
<evidence type="ECO:0000305" key="4"/>
<reference key="1">
    <citation type="journal article" date="1996" name="J. Cell Sci.">
        <title>The cruciated microtubule-associated fibers of the green alga Dunaliella bioculata consist of a 31 kDa SF-assemblin.</title>
        <authorList>
            <person name="Lechtreck K.-F."/>
            <person name="Frins S."/>
            <person name="Bilski J."/>
            <person name="Teltenkoetter A."/>
            <person name="Weber K."/>
            <person name="Melkonian M."/>
        </authorList>
    </citation>
    <scope>NUCLEOTIDE SEQUENCE [MRNA]</scope>
    <scope>PARTIAL PROTEIN SEQUENCE</scope>
    <source>
        <strain>SAG 19-4</strain>
    </source>
</reference>